<proteinExistence type="evidence at protein level"/>
<evidence type="ECO:0000255" key="1">
    <source>
        <dbReference type="PROSITE-ProRule" id="PRU00625"/>
    </source>
</evidence>
<evidence type="ECO:0000256" key="2">
    <source>
        <dbReference type="SAM" id="MobiDB-lite"/>
    </source>
</evidence>
<evidence type="ECO:0000269" key="3">
    <source>
    </source>
</evidence>
<evidence type="ECO:0000269" key="4">
    <source>
    </source>
</evidence>
<evidence type="ECO:0000269" key="5">
    <source>
    </source>
</evidence>
<evidence type="ECO:0000269" key="6">
    <source>
    </source>
</evidence>
<evidence type="ECO:0000305" key="7"/>
<evidence type="ECO:0007829" key="8">
    <source>
        <dbReference type="PDB" id="9ESH"/>
    </source>
</evidence>
<evidence type="ECO:0007829" key="9">
    <source>
        <dbReference type="PDB" id="9ESI"/>
    </source>
</evidence>
<feature type="chain" id="PRO_0000197104" description="Pre-mRNA-splicing factor cdc5">
    <location>
        <begin position="1"/>
        <end position="757"/>
    </location>
</feature>
<feature type="domain" description="HTH myb-type 1" evidence="1">
    <location>
        <begin position="1"/>
        <end position="56"/>
    </location>
</feature>
<feature type="domain" description="HTH myb-type 2" evidence="1">
    <location>
        <begin position="57"/>
        <end position="106"/>
    </location>
</feature>
<feature type="DNA-binding region" description="H-T-H motif" evidence="1">
    <location>
        <begin position="29"/>
        <end position="52"/>
    </location>
</feature>
<feature type="DNA-binding region" description="H-T-H motif" evidence="1">
    <location>
        <begin position="80"/>
        <end position="102"/>
    </location>
</feature>
<feature type="region of interest" description="Disordered" evidence="2">
    <location>
        <begin position="271"/>
        <end position="319"/>
    </location>
</feature>
<feature type="compositionally biased region" description="Basic and acidic residues" evidence="2">
    <location>
        <begin position="271"/>
        <end position="307"/>
    </location>
</feature>
<feature type="helix" evidence="9">
    <location>
        <begin position="11"/>
        <end position="24"/>
    </location>
</feature>
<feature type="helix" evidence="9">
    <location>
        <begin position="29"/>
        <end position="35"/>
    </location>
</feature>
<feature type="helix" evidence="9">
    <location>
        <begin position="41"/>
        <end position="50"/>
    </location>
</feature>
<feature type="helix" evidence="9">
    <location>
        <begin position="63"/>
        <end position="75"/>
    </location>
</feature>
<feature type="strand" evidence="9">
    <location>
        <begin position="76"/>
        <end position="78"/>
    </location>
</feature>
<feature type="helix" evidence="9">
    <location>
        <begin position="80"/>
        <end position="87"/>
    </location>
</feature>
<feature type="helix" evidence="9">
    <location>
        <begin position="91"/>
        <end position="112"/>
    </location>
</feature>
<feature type="helix" evidence="9">
    <location>
        <begin position="130"/>
        <end position="134"/>
    </location>
</feature>
<feature type="helix" evidence="9">
    <location>
        <begin position="143"/>
        <end position="145"/>
    </location>
</feature>
<feature type="helix" evidence="9">
    <location>
        <begin position="158"/>
        <end position="170"/>
    </location>
</feature>
<feature type="turn" evidence="9">
    <location>
        <begin position="175"/>
        <end position="178"/>
    </location>
</feature>
<feature type="helix" evidence="9">
    <location>
        <begin position="179"/>
        <end position="205"/>
    </location>
</feature>
<feature type="strand" evidence="9">
    <location>
        <begin position="221"/>
        <end position="224"/>
    </location>
</feature>
<feature type="helix" evidence="9">
    <location>
        <begin position="240"/>
        <end position="243"/>
    </location>
</feature>
<feature type="helix" evidence="9">
    <location>
        <begin position="246"/>
        <end position="268"/>
    </location>
</feature>
<feature type="helix" evidence="9">
    <location>
        <begin position="270"/>
        <end position="273"/>
    </location>
</feature>
<feature type="helix" evidence="8">
    <location>
        <begin position="380"/>
        <end position="393"/>
    </location>
</feature>
<feature type="helix" evidence="8">
    <location>
        <begin position="397"/>
        <end position="399"/>
    </location>
</feature>
<feature type="helix" evidence="9">
    <location>
        <begin position="508"/>
        <end position="522"/>
    </location>
</feature>
<feature type="helix" evidence="9">
    <location>
        <begin position="523"/>
        <end position="525"/>
    </location>
</feature>
<feature type="turn" evidence="9">
    <location>
        <begin position="531"/>
        <end position="533"/>
    </location>
</feature>
<feature type="helix" evidence="9">
    <location>
        <begin position="543"/>
        <end position="548"/>
    </location>
</feature>
<feature type="turn" evidence="9">
    <location>
        <begin position="562"/>
        <end position="565"/>
    </location>
</feature>
<feature type="helix" evidence="9">
    <location>
        <begin position="566"/>
        <end position="571"/>
    </location>
</feature>
<feature type="helix" evidence="9">
    <location>
        <begin position="572"/>
        <end position="574"/>
    </location>
</feature>
<feature type="helix" evidence="9">
    <location>
        <begin position="576"/>
        <end position="579"/>
    </location>
</feature>
<feature type="helix" evidence="9">
    <location>
        <begin position="594"/>
        <end position="607"/>
    </location>
</feature>
<feature type="helix" evidence="9">
    <location>
        <begin position="616"/>
        <end position="632"/>
    </location>
</feature>
<feature type="turn" evidence="9">
    <location>
        <begin position="641"/>
        <end position="645"/>
    </location>
</feature>
<feature type="helix" evidence="9">
    <location>
        <begin position="650"/>
        <end position="673"/>
    </location>
</feature>
<feature type="helix" evidence="9">
    <location>
        <begin position="675"/>
        <end position="754"/>
    </location>
</feature>
<reference key="1">
    <citation type="journal article" date="1994" name="EMBO J.">
        <title>The Schizosaccharomyces pombe cdc5+ gene encodes an essential protein with homology to c-Myb.</title>
        <authorList>
            <person name="Ohi R."/>
            <person name="McCollum D."/>
            <person name="Hirani B."/>
            <person name="den Haese G.J."/>
            <person name="Zhang X."/>
            <person name="Burke J.D."/>
            <person name="Turner K."/>
            <person name="Gould K.L."/>
        </authorList>
    </citation>
    <scope>NUCLEOTIDE SEQUENCE [MRNA]</scope>
    <scope>FUNCTION</scope>
    <source>
        <strain>972 / ATCC 24843</strain>
    </source>
</reference>
<reference key="2">
    <citation type="journal article" date="2002" name="Nature">
        <title>The genome sequence of Schizosaccharomyces pombe.</title>
        <authorList>
            <person name="Wood V."/>
            <person name="Gwilliam R."/>
            <person name="Rajandream M.A."/>
            <person name="Lyne M.H."/>
            <person name="Lyne R."/>
            <person name="Stewart A."/>
            <person name="Sgouros J.G."/>
            <person name="Peat N."/>
            <person name="Hayles J."/>
            <person name="Baker S.G."/>
            <person name="Basham D."/>
            <person name="Bowman S."/>
            <person name="Brooks K."/>
            <person name="Brown D."/>
            <person name="Brown S."/>
            <person name="Chillingworth T."/>
            <person name="Churcher C.M."/>
            <person name="Collins M."/>
            <person name="Connor R."/>
            <person name="Cronin A."/>
            <person name="Davis P."/>
            <person name="Feltwell T."/>
            <person name="Fraser A."/>
            <person name="Gentles S."/>
            <person name="Goble A."/>
            <person name="Hamlin N."/>
            <person name="Harris D.E."/>
            <person name="Hidalgo J."/>
            <person name="Hodgson G."/>
            <person name="Holroyd S."/>
            <person name="Hornsby T."/>
            <person name="Howarth S."/>
            <person name="Huckle E.J."/>
            <person name="Hunt S."/>
            <person name="Jagels K."/>
            <person name="James K.D."/>
            <person name="Jones L."/>
            <person name="Jones M."/>
            <person name="Leather S."/>
            <person name="McDonald S."/>
            <person name="McLean J."/>
            <person name="Mooney P."/>
            <person name="Moule S."/>
            <person name="Mungall K.L."/>
            <person name="Murphy L.D."/>
            <person name="Niblett D."/>
            <person name="Odell C."/>
            <person name="Oliver K."/>
            <person name="O'Neil S."/>
            <person name="Pearson D."/>
            <person name="Quail M.A."/>
            <person name="Rabbinowitsch E."/>
            <person name="Rutherford K.M."/>
            <person name="Rutter S."/>
            <person name="Saunders D."/>
            <person name="Seeger K."/>
            <person name="Sharp S."/>
            <person name="Skelton J."/>
            <person name="Simmonds M.N."/>
            <person name="Squares R."/>
            <person name="Squares S."/>
            <person name="Stevens K."/>
            <person name="Taylor K."/>
            <person name="Taylor R.G."/>
            <person name="Tivey A."/>
            <person name="Walsh S.V."/>
            <person name="Warren T."/>
            <person name="Whitehead S."/>
            <person name="Woodward J.R."/>
            <person name="Volckaert G."/>
            <person name="Aert R."/>
            <person name="Robben J."/>
            <person name="Grymonprez B."/>
            <person name="Weltjens I."/>
            <person name="Vanstreels E."/>
            <person name="Rieger M."/>
            <person name="Schaefer M."/>
            <person name="Mueller-Auer S."/>
            <person name="Gabel C."/>
            <person name="Fuchs M."/>
            <person name="Duesterhoeft A."/>
            <person name="Fritzc C."/>
            <person name="Holzer E."/>
            <person name="Moestl D."/>
            <person name="Hilbert H."/>
            <person name="Borzym K."/>
            <person name="Langer I."/>
            <person name="Beck A."/>
            <person name="Lehrach H."/>
            <person name="Reinhardt R."/>
            <person name="Pohl T.M."/>
            <person name="Eger P."/>
            <person name="Zimmermann W."/>
            <person name="Wedler H."/>
            <person name="Wambutt R."/>
            <person name="Purnelle B."/>
            <person name="Goffeau A."/>
            <person name="Cadieu E."/>
            <person name="Dreano S."/>
            <person name="Gloux S."/>
            <person name="Lelaure V."/>
            <person name="Mottier S."/>
            <person name="Galibert F."/>
            <person name="Aves S.J."/>
            <person name="Xiang Z."/>
            <person name="Hunt C."/>
            <person name="Moore K."/>
            <person name="Hurst S.M."/>
            <person name="Lucas M."/>
            <person name="Rochet M."/>
            <person name="Gaillardin C."/>
            <person name="Tallada V.A."/>
            <person name="Garzon A."/>
            <person name="Thode G."/>
            <person name="Daga R.R."/>
            <person name="Cruzado L."/>
            <person name="Jimenez J."/>
            <person name="Sanchez M."/>
            <person name="del Rey F."/>
            <person name="Benito J."/>
            <person name="Dominguez A."/>
            <person name="Revuelta J.L."/>
            <person name="Moreno S."/>
            <person name="Armstrong J."/>
            <person name="Forsburg S.L."/>
            <person name="Cerutti L."/>
            <person name="Lowe T."/>
            <person name="McCombie W.R."/>
            <person name="Paulsen I."/>
            <person name="Potashkin J."/>
            <person name="Shpakovski G.V."/>
            <person name="Ussery D."/>
            <person name="Barrell B.G."/>
            <person name="Nurse P."/>
        </authorList>
    </citation>
    <scope>NUCLEOTIDE SEQUENCE [LARGE SCALE GENOMIC DNA]</scope>
    <source>
        <strain>972 / ATCC 24843</strain>
    </source>
</reference>
<reference key="3">
    <citation type="journal article" date="1999" name="Mol. Cell. Biol.">
        <title>Myb-related fission yeast cdc5p is a component of a 40S snRNP-containing complex and is essential for pre-mRNA splicing.</title>
        <authorList>
            <person name="McDonald W.H."/>
            <person name="Ohi R."/>
            <person name="Smelkova N."/>
            <person name="Frendewey D."/>
            <person name="Gould K.L."/>
        </authorList>
    </citation>
    <scope>FUNCTION</scope>
    <scope>SUBCELLULAR LOCATION</scope>
    <scope>IDENTIFICATION IN THE 40S CDC5-ASSOCIATED COMPLEX</scope>
</reference>
<reference key="4">
    <citation type="journal article" date="2002" name="Mol. Cell. Biol.">
        <title>Proteomics analysis reveals stable multiprotein complexes in both fission and budding yeasts containing Myb-related Cdc5p/Cef1p, novel pre-mRNA splicing factors, and snRNAs.</title>
        <authorList>
            <person name="Ohi M.D."/>
            <person name="Link A.J."/>
            <person name="Ren L."/>
            <person name="Jennings J.L."/>
            <person name="McDonald W.H."/>
            <person name="Gould K.L."/>
        </authorList>
    </citation>
    <scope>IDENTIFICATION IN THE CWF COMPLEX</scope>
    <scope>IDENTIFICATION BY MASS SPECTROMETRY</scope>
</reference>
<reference key="5">
    <citation type="journal article" date="2018" name="EMBO J.">
        <title>Sde2 is an intron-specific pre-mRNA splicing regulator activated by ubiquitin-like processing.</title>
        <authorList>
            <person name="Thakran P."/>
            <person name="Pandit P.A."/>
            <person name="Datta S."/>
            <person name="Kolathur K.K."/>
            <person name="Pleiss J.A."/>
            <person name="Mishra S.K."/>
        </authorList>
    </citation>
    <scope>INTERACTION WITH SDE2 AND CAY1</scope>
</reference>
<protein>
    <recommendedName>
        <fullName>Pre-mRNA-splicing factor cdc5</fullName>
    </recommendedName>
    <alternativeName>
        <fullName>Cell division control protein 5</fullName>
    </alternativeName>
</protein>
<name>CEF1_SCHPO</name>
<keyword id="KW-0002">3D-structure</keyword>
<keyword id="KW-0238">DNA-binding</keyword>
<keyword id="KW-0507">mRNA processing</keyword>
<keyword id="KW-0508">mRNA splicing</keyword>
<keyword id="KW-0539">Nucleus</keyword>
<keyword id="KW-1185">Reference proteome</keyword>
<keyword id="KW-0677">Repeat</keyword>
<keyword id="KW-0747">Spliceosome</keyword>
<dbReference type="EMBL" id="L19525">
    <property type="protein sequence ID" value="AAA17515.1"/>
    <property type="molecule type" value="mRNA"/>
</dbReference>
<dbReference type="EMBL" id="CU329670">
    <property type="protein sequence ID" value="CAB90139.1"/>
    <property type="molecule type" value="Genomic_DNA"/>
</dbReference>
<dbReference type="PIR" id="S41712">
    <property type="entry name" value="S41712"/>
</dbReference>
<dbReference type="RefSeq" id="NP_593880.1">
    <property type="nucleotide sequence ID" value="NM_001019310.2"/>
</dbReference>
<dbReference type="PDB" id="3JB9">
    <property type="method" value="EM"/>
    <property type="resolution" value="3.60 A"/>
    <property type="chains" value="W=1-236, W=652-757"/>
</dbReference>
<dbReference type="PDB" id="9ESH">
    <property type="method" value="EM"/>
    <property type="resolution" value="3.20 A"/>
    <property type="chains" value="W=1-757"/>
</dbReference>
<dbReference type="PDB" id="9ESI">
    <property type="method" value="EM"/>
    <property type="resolution" value="3.10 A"/>
    <property type="chains" value="W=1-757"/>
</dbReference>
<dbReference type="PDBsum" id="3JB9"/>
<dbReference type="PDBsum" id="9ESH"/>
<dbReference type="PDBsum" id="9ESI"/>
<dbReference type="BMRB" id="P39964"/>
<dbReference type="EMDB" id="EMD-19941"/>
<dbReference type="EMDB" id="EMD-19942"/>
<dbReference type="SMR" id="P39964"/>
<dbReference type="BioGRID" id="279998">
    <property type="interactions" value="91"/>
</dbReference>
<dbReference type="DIP" id="DIP-34817N"/>
<dbReference type="FunCoup" id="P39964">
    <property type="interactions" value="788"/>
</dbReference>
<dbReference type="IntAct" id="P39964">
    <property type="interactions" value="51"/>
</dbReference>
<dbReference type="STRING" id="284812.P39964"/>
<dbReference type="iPTMnet" id="P39964"/>
<dbReference type="PaxDb" id="4896-SPAC644.12.1"/>
<dbReference type="EnsemblFungi" id="SPAC644.12.1">
    <property type="protein sequence ID" value="SPAC644.12.1:pep"/>
    <property type="gene ID" value="SPAC644.12"/>
</dbReference>
<dbReference type="GeneID" id="2543583"/>
<dbReference type="KEGG" id="spo:2543583"/>
<dbReference type="PomBase" id="SPAC644.12">
    <property type="gene designation" value="cdc5"/>
</dbReference>
<dbReference type="VEuPathDB" id="FungiDB:SPAC644.12"/>
<dbReference type="eggNOG" id="KOG0050">
    <property type="taxonomic scope" value="Eukaryota"/>
</dbReference>
<dbReference type="HOGENOM" id="CLU_009082_0_0_1"/>
<dbReference type="InParanoid" id="P39964"/>
<dbReference type="OMA" id="KMGMAGE"/>
<dbReference type="PhylomeDB" id="P39964"/>
<dbReference type="Reactome" id="R-SPO-72163">
    <property type="pathway name" value="mRNA Splicing - Major Pathway"/>
</dbReference>
<dbReference type="PRO" id="PR:P39964"/>
<dbReference type="Proteomes" id="UP000002485">
    <property type="component" value="Chromosome I"/>
</dbReference>
<dbReference type="GO" id="GO:0005829">
    <property type="term" value="C:cytosol"/>
    <property type="evidence" value="ECO:0000314"/>
    <property type="project" value="PomBase"/>
</dbReference>
<dbReference type="GO" id="GO:0140602">
    <property type="term" value="C:nucleolar peripheral inclusion body"/>
    <property type="evidence" value="ECO:0000314"/>
    <property type="project" value="PomBase"/>
</dbReference>
<dbReference type="GO" id="GO:0005634">
    <property type="term" value="C:nucleus"/>
    <property type="evidence" value="ECO:0000314"/>
    <property type="project" value="PomBase"/>
</dbReference>
<dbReference type="GO" id="GO:0071014">
    <property type="term" value="C:post-mRNA release spliceosomal complex"/>
    <property type="evidence" value="ECO:0000314"/>
    <property type="project" value="PomBase"/>
</dbReference>
<dbReference type="GO" id="GO:0000974">
    <property type="term" value="C:Prp19 complex"/>
    <property type="evidence" value="ECO:0000314"/>
    <property type="project" value="PomBase"/>
</dbReference>
<dbReference type="GO" id="GO:0005681">
    <property type="term" value="C:spliceosomal complex"/>
    <property type="evidence" value="ECO:0000314"/>
    <property type="project" value="PomBase"/>
</dbReference>
<dbReference type="GO" id="GO:0003677">
    <property type="term" value="F:DNA binding"/>
    <property type="evidence" value="ECO:0000314"/>
    <property type="project" value="PomBase"/>
</dbReference>
<dbReference type="GO" id="GO:0045292">
    <property type="term" value="P:mRNA cis splicing, via spliceosome"/>
    <property type="evidence" value="ECO:0000315"/>
    <property type="project" value="PomBase"/>
</dbReference>
<dbReference type="GO" id="GO:0000398">
    <property type="term" value="P:mRNA splicing, via spliceosome"/>
    <property type="evidence" value="ECO:0000318"/>
    <property type="project" value="GO_Central"/>
</dbReference>
<dbReference type="CDD" id="cd00167">
    <property type="entry name" value="SANT"/>
    <property type="match status" value="1"/>
</dbReference>
<dbReference type="CDD" id="cd11659">
    <property type="entry name" value="SANT_CDC5_II"/>
    <property type="match status" value="1"/>
</dbReference>
<dbReference type="FunFam" id="1.10.10.60:FF:000021">
    <property type="entry name" value="CDC5 cell division cycle 5-like"/>
    <property type="match status" value="1"/>
</dbReference>
<dbReference type="Gene3D" id="1.10.10.60">
    <property type="entry name" value="Homeodomain-like"/>
    <property type="match status" value="2"/>
</dbReference>
<dbReference type="InterPro" id="IPR047242">
    <property type="entry name" value="CDC5L/Cef1"/>
</dbReference>
<dbReference type="InterPro" id="IPR021786">
    <property type="entry name" value="Cdc5p/Cef1_C"/>
</dbReference>
<dbReference type="InterPro" id="IPR009057">
    <property type="entry name" value="Homeodomain-like_sf"/>
</dbReference>
<dbReference type="InterPro" id="IPR017930">
    <property type="entry name" value="Myb_dom"/>
</dbReference>
<dbReference type="InterPro" id="IPR001005">
    <property type="entry name" value="SANT/Myb"/>
</dbReference>
<dbReference type="InterPro" id="IPR047240">
    <property type="entry name" value="SANT_CDC5L_II"/>
</dbReference>
<dbReference type="PANTHER" id="PTHR45885">
    <property type="entry name" value="CELL DIVISION CYCLE 5-LIKE PROTEIN"/>
    <property type="match status" value="1"/>
</dbReference>
<dbReference type="PANTHER" id="PTHR45885:SF1">
    <property type="entry name" value="CELL DIVISION CYCLE 5-LIKE PROTEIN"/>
    <property type="match status" value="1"/>
</dbReference>
<dbReference type="Pfam" id="PF11831">
    <property type="entry name" value="Myb_Cef"/>
    <property type="match status" value="1"/>
</dbReference>
<dbReference type="Pfam" id="PF13921">
    <property type="entry name" value="Myb_DNA-bind_6"/>
    <property type="match status" value="1"/>
</dbReference>
<dbReference type="SMART" id="SM00717">
    <property type="entry name" value="SANT"/>
    <property type="match status" value="2"/>
</dbReference>
<dbReference type="SUPFAM" id="SSF46689">
    <property type="entry name" value="Homeodomain-like"/>
    <property type="match status" value="2"/>
</dbReference>
<dbReference type="PROSITE" id="PS51294">
    <property type="entry name" value="HTH_MYB"/>
    <property type="match status" value="2"/>
</dbReference>
<comment type="function">
    <text evidence="3 6">Involved in mRNA splicing and cell cycle control.</text>
</comment>
<comment type="subunit">
    <text evidence="3 4 5">Belongs to the 40S cdc5-associated complex (or cwf complex), a spliceosome sub-complex reminiscent of a late-stage spliceosome composed of the U2, U5 and U6 snRNAs and at least brr2, cdc5, cwf2/prp3, cwf3/syf1, cwf4/syf3, cwf5/ecm2, spp42/cwf6, cwf7/spf27, cwf8, cwf9, cwf10, cwf11, cwf12, prp45/cwf13, cwf14, cwf15, cwf16, cwf17, cwf18, cwf19, cwf20, cwf21, cwf22, cwf23, cwf24, cwf25, cwf26, cyp7/cwf27, cwf28, cwf29/ist3, lea1, msl1, prp5/cwf1, prp10, prp12/sap130, prp17, prp22, sap61, sap62, sap114, sap145, slu7, smb1, smd1, smd3, smf1, smg1 and syf2 (PubMed:10409726, PubMed:11884590). Interacts with sde2 (PubMed:28947618). Interacts with cay1/cactin (PubMed:28947618).</text>
</comment>
<comment type="interaction">
    <interactant intactId="EBI-538771">
        <id>P39964</id>
    </interactant>
    <interactant intactId="EBI-538866">
        <id>O94316</id>
        <label>cwf10</label>
    </interactant>
    <organismsDiffer>false</organismsDiffer>
    <experiments>5</experiments>
</comment>
<comment type="interaction">
    <interactant intactId="EBI-538771">
        <id>P39964</id>
    </interactant>
    <interactant intactId="EBI-539118">
        <id>O94508</id>
        <label>cwf11</label>
    </interactant>
    <organismsDiffer>false</organismsDiffer>
    <experiments>3</experiments>
</comment>
<comment type="interaction">
    <interactant intactId="EBI-538771">
        <id>P39964</id>
    </interactant>
    <interactant intactId="EBI-538882">
        <id>O74370</id>
        <label>cwf12</label>
    </interactant>
    <organismsDiffer>false</organismsDiffer>
    <experiments>3</experiments>
</comment>
<comment type="interaction">
    <interactant intactId="EBI-538771">
        <id>P39964</id>
    </interactant>
    <interactant intactId="EBI-539124">
        <id>O94620</id>
        <label>cwf17</label>
    </interactant>
    <organismsDiffer>false</organismsDiffer>
    <experiments>3</experiments>
</comment>
<comment type="interaction">
    <interactant intactId="EBI-538771">
        <id>P39964</id>
    </interactant>
    <interactant intactId="EBI-538799">
        <id>P87126</id>
        <label>cwf2</label>
    </interactant>
    <organismsDiffer>false</organismsDiffer>
    <experiments>6</experiments>
</comment>
<comment type="interaction">
    <interactant intactId="EBI-538771">
        <id>P39964</id>
    </interactant>
    <interactant intactId="EBI-538809">
        <id>Q9P7R9</id>
        <label>cwf3</label>
    </interactant>
    <organismsDiffer>false</organismsDiffer>
    <experiments>7</experiments>
</comment>
<comment type="interaction">
    <interactant intactId="EBI-538771">
        <id>P39964</id>
    </interactant>
    <interactant intactId="EBI-538818">
        <id>P87312</id>
        <label>cwf4</label>
    </interactant>
    <organismsDiffer>false</organismsDiffer>
    <experiments>7</experiments>
</comment>
<comment type="interaction">
    <interactant intactId="EBI-538771">
        <id>P39964</id>
    </interactant>
    <interactant intactId="EBI-538826">
        <id>O59800</id>
        <label>cwf5</label>
    </interactant>
    <organismsDiffer>false</organismsDiffer>
    <experiments>4</experiments>
</comment>
<comment type="interaction">
    <interactant intactId="EBI-538771">
        <id>P39964</id>
    </interactant>
    <interactant intactId="EBI-538841">
        <id>Q9USV3</id>
        <label>cwf7</label>
    </interactant>
    <organismsDiffer>false</organismsDiffer>
    <experiments>4</experiments>
</comment>
<comment type="interaction">
    <interactant intactId="EBI-538771">
        <id>P39964</id>
    </interactant>
    <interactant intactId="EBI-457758">
        <id>Q09882</id>
        <label>prp45</label>
    </interactant>
    <organismsDiffer>false</organismsDiffer>
    <experiments>3</experiments>
</comment>
<comment type="interaction">
    <interactant intactId="EBI-538771">
        <id>P39964</id>
    </interactant>
    <interactant intactId="EBI-538787">
        <id>O13615</id>
        <label>prp5</label>
    </interactant>
    <organismsDiffer>false</organismsDiffer>
    <experiments>7</experiments>
</comment>
<comment type="subcellular location">
    <subcellularLocation>
        <location evidence="1 3">Nucleus</location>
    </subcellularLocation>
</comment>
<comment type="similarity">
    <text evidence="7">Belongs to the CEF1 family.</text>
</comment>
<sequence length="757" mass="86844">MVVLKGGAWKNTEDEILKAAVSKYGKNQWARISSLLVRKTPKQCKARWYEWIDPSIKKTEWSREEDEKLLHLAKLLPTQWRTIAPIVGRTATQCLERYQKLLDDLEAKENEQLGLISGEGAEAAAPVNDPNSRLRFGEAEPNLETLPALPDAIDMDEDEKEMLSEARARLANTQGKKAKRKDREKQLELTRRLSHLQKRRELKAAGINIKLFRRKKNEMDYNASIPFEKKPAIGFYDTSEEDRQNFREKREADQKIIENGIRNNEMESEGRKFGHFEKPKPIDRVKKPNKDAQEEKMRRLAEAEQMSKRRKLNLPSPTVSQDELDKVVKLGFAGDRARAMTDTTPDANYSTNLLGKYTQIERATPLRTPISGELEGREDSVTIEVRNQLMRNREQSSLLGQESIPLQPGGTGYTGVTPSHAANGSALAAPQATPFRTPRDTFSINAAAERAGRLASERENKIRLKALRELLAKLPKPKNDYELMEPRFADETDVEATVGVLEEDATDRERRIQERIAEKERLAKARRSQVIQRDLIRPSVTQPEKWKRSLENEDPTANVLLKEMIALISSDAINYPFGNSKVKGTANKVPDLSNEEIERCRLLLKKEIGQLESDDYIQFEKEFLETYSALHNTSSLLPGLVIYEEDDEDVEAAEKFYTNDIQRDLAKKALECNKLENRVYDLVRSSYEQRNFLIKKISHAWKALQTERKNLTCYEFLYNQERLALPNRLEAAEIELSKMQQIEAYAQQDYARVTGQN</sequence>
<accession>P39964</accession>
<organism>
    <name type="scientific">Schizosaccharomyces pombe (strain 972 / ATCC 24843)</name>
    <name type="common">Fission yeast</name>
    <dbReference type="NCBI Taxonomy" id="284812"/>
    <lineage>
        <taxon>Eukaryota</taxon>
        <taxon>Fungi</taxon>
        <taxon>Dikarya</taxon>
        <taxon>Ascomycota</taxon>
        <taxon>Taphrinomycotina</taxon>
        <taxon>Schizosaccharomycetes</taxon>
        <taxon>Schizosaccharomycetales</taxon>
        <taxon>Schizosaccharomycetaceae</taxon>
        <taxon>Schizosaccharomyces</taxon>
    </lineage>
</organism>
<gene>
    <name type="primary">cdc5</name>
    <name type="ORF">SPAC644.12</name>
</gene>